<evidence type="ECO:0000250" key="1"/>
<evidence type="ECO:0000250" key="2">
    <source>
        <dbReference type="UniProtKB" id="A2RT62"/>
    </source>
</evidence>
<evidence type="ECO:0000256" key="3">
    <source>
        <dbReference type="SAM" id="MobiDB-lite"/>
    </source>
</evidence>
<evidence type="ECO:0000269" key="4">
    <source>
    </source>
</evidence>
<evidence type="ECO:0000269" key="5">
    <source>
    </source>
</evidence>
<evidence type="ECO:0000303" key="6">
    <source>
    </source>
</evidence>
<evidence type="ECO:0000305" key="7"/>
<proteinExistence type="evidence at protein level"/>
<feature type="chain" id="PRO_0000119863" description="F-box/LRR-repeat protein 16">
    <location>
        <begin position="1"/>
        <end position="479"/>
    </location>
</feature>
<feature type="domain" description="F-box">
    <location>
        <begin position="94"/>
        <end position="139"/>
    </location>
</feature>
<feature type="repeat" description="LRR 1">
    <location>
        <begin position="244"/>
        <end position="266"/>
    </location>
</feature>
<feature type="repeat" description="LRR 2">
    <location>
        <begin position="267"/>
        <end position="290"/>
    </location>
</feature>
<feature type="repeat" description="LRR 3">
    <location>
        <begin position="319"/>
        <end position="343"/>
    </location>
</feature>
<feature type="repeat" description="LRR 4">
    <location>
        <begin position="345"/>
        <end position="369"/>
    </location>
</feature>
<feature type="repeat" description="LRR 5">
    <location>
        <begin position="371"/>
        <end position="395"/>
    </location>
</feature>
<feature type="repeat" description="LRR 6">
    <location>
        <begin position="396"/>
        <end position="420"/>
    </location>
</feature>
<feature type="repeat" description="LRR 7">
    <location>
        <begin position="446"/>
        <end position="470"/>
    </location>
</feature>
<feature type="region of interest" description="Disordered" evidence="3">
    <location>
        <begin position="1"/>
        <end position="62"/>
    </location>
</feature>
<feature type="compositionally biased region" description="Pro residues" evidence="3">
    <location>
        <begin position="47"/>
        <end position="60"/>
    </location>
</feature>
<feature type="modified residue" description="Omega-N-methylarginine" evidence="2">
    <location>
        <position position="92"/>
    </location>
</feature>
<feature type="splice variant" id="VSP_056996" description="In isoform 2." evidence="6">
    <location>
        <begin position="1"/>
        <end position="212"/>
    </location>
</feature>
<feature type="sequence variant" id="VAR_028163" description="In dbSNP:rs17855603." evidence="4 5">
    <original>L</original>
    <variation>P</variation>
    <location>
        <position position="429"/>
    </location>
</feature>
<comment type="function">
    <text evidence="1">Substrate-recognition component of the SCF (SKP1-CUL1-F-box protein)-type E3 ubiquitin ligase complex.</text>
</comment>
<comment type="subunit">
    <text evidence="1">Interacts with SKP1 and CUL1.</text>
</comment>
<comment type="interaction">
    <interactant intactId="EBI-7208098">
        <id>Q8N461</id>
    </interactant>
    <interactant intactId="EBI-447269">
        <id>Q16665</id>
        <label>HIF1A</label>
    </interactant>
    <organismsDiffer>false</organismsDiffer>
    <experiments>6</experiments>
</comment>
<comment type="alternative products">
    <event type="alternative splicing"/>
    <isoform>
        <id>Q8N461-1</id>
        <name>1</name>
        <sequence type="displayed"/>
    </isoform>
    <isoform>
        <id>Q8N461-2</id>
        <name>2</name>
        <sequence type="described" ref="VSP_056996"/>
    </isoform>
</comment>
<comment type="sequence caution" evidence="7">
    <conflict type="erroneous gene model prediction">
        <sequence resource="EMBL-CDS" id="AAK61245"/>
    </conflict>
</comment>
<name>FXL16_HUMAN</name>
<accession>Q8N461</accession>
<accession>B3KR59</accession>
<accession>D3DU60</accession>
<accession>Q2MHR2</accession>
<accession>Q96S14</accession>
<accession>Q9UJI0</accession>
<dbReference type="EMBL" id="AK091054">
    <property type="protein sequence ID" value="BAG52271.1"/>
    <property type="molecule type" value="mRNA"/>
</dbReference>
<dbReference type="EMBL" id="AE006464">
    <property type="protein sequence ID" value="AAK61245.1"/>
    <property type="status" value="ALT_SEQ"/>
    <property type="molecule type" value="Genomic_DNA"/>
</dbReference>
<dbReference type="EMBL" id="Z92544">
    <property type="status" value="NOT_ANNOTATED_CDS"/>
    <property type="molecule type" value="Genomic_DNA"/>
</dbReference>
<dbReference type="EMBL" id="Z97653">
    <property type="status" value="NOT_ANNOTATED_CDS"/>
    <property type="molecule type" value="Genomic_DNA"/>
</dbReference>
<dbReference type="EMBL" id="CH471112">
    <property type="protein sequence ID" value="EAW85749.1"/>
    <property type="molecule type" value="Genomic_DNA"/>
</dbReference>
<dbReference type="EMBL" id="CH471112">
    <property type="protein sequence ID" value="EAW85750.1"/>
    <property type="molecule type" value="Genomic_DNA"/>
</dbReference>
<dbReference type="EMBL" id="BC036680">
    <property type="protein sequence ID" value="AAH36680.1"/>
    <property type="molecule type" value="mRNA"/>
</dbReference>
<dbReference type="CCDS" id="CCDS10421.1">
    <molecule id="Q8N461-1"/>
</dbReference>
<dbReference type="RefSeq" id="NP_699181.2">
    <molecule id="Q8N461-1"/>
    <property type="nucleotide sequence ID" value="NM_153350.4"/>
</dbReference>
<dbReference type="RefSeq" id="XP_047289602.1">
    <molecule id="Q8N461-1"/>
    <property type="nucleotide sequence ID" value="XM_047433646.1"/>
</dbReference>
<dbReference type="SMR" id="Q8N461"/>
<dbReference type="BioGRID" id="126979">
    <property type="interactions" value="32"/>
</dbReference>
<dbReference type="ComplexPortal" id="CPX-2343">
    <property type="entry name" value="SCF E3 ubiquitin ligase complex, FBXL16 variant"/>
</dbReference>
<dbReference type="FunCoup" id="Q8N461">
    <property type="interactions" value="409"/>
</dbReference>
<dbReference type="IntAct" id="Q8N461">
    <property type="interactions" value="25"/>
</dbReference>
<dbReference type="MINT" id="Q8N461"/>
<dbReference type="STRING" id="9606.ENSP00000380746"/>
<dbReference type="GlyGen" id="Q8N461">
    <property type="glycosylation" value="1 site"/>
</dbReference>
<dbReference type="iPTMnet" id="Q8N461"/>
<dbReference type="PhosphoSitePlus" id="Q8N461"/>
<dbReference type="SwissPalm" id="Q8N461"/>
<dbReference type="BioMuta" id="FBXL16"/>
<dbReference type="DMDM" id="116242480"/>
<dbReference type="jPOST" id="Q8N461"/>
<dbReference type="MassIVE" id="Q8N461"/>
<dbReference type="PaxDb" id="9606-ENSP00000380746"/>
<dbReference type="PeptideAtlas" id="Q8N461"/>
<dbReference type="ProteomicsDB" id="3581"/>
<dbReference type="ProteomicsDB" id="71888">
    <molecule id="Q8N461-1"/>
</dbReference>
<dbReference type="Antibodypedia" id="22839">
    <property type="antibodies" value="126 antibodies from 26 providers"/>
</dbReference>
<dbReference type="DNASU" id="146330"/>
<dbReference type="Ensembl" id="ENST00000397621.6">
    <molecule id="Q8N461-1"/>
    <property type="protein sequence ID" value="ENSP00000380746.1"/>
    <property type="gene ID" value="ENSG00000127585.13"/>
</dbReference>
<dbReference type="Ensembl" id="ENST00000562563.1">
    <molecule id="Q8N461-2"/>
    <property type="protein sequence ID" value="ENSP00000455217.1"/>
    <property type="gene ID" value="ENSG00000127585.13"/>
</dbReference>
<dbReference type="GeneID" id="146330"/>
<dbReference type="KEGG" id="hsa:146330"/>
<dbReference type="MANE-Select" id="ENST00000397621.6">
    <property type="protein sequence ID" value="ENSP00000380746.1"/>
    <property type="RefSeq nucleotide sequence ID" value="NM_153350.4"/>
    <property type="RefSeq protein sequence ID" value="NP_699181.2"/>
</dbReference>
<dbReference type="UCSC" id="uc002cjb.4">
    <molecule id="Q8N461-1"/>
    <property type="organism name" value="human"/>
</dbReference>
<dbReference type="AGR" id="HGNC:14150"/>
<dbReference type="CTD" id="146330"/>
<dbReference type="DisGeNET" id="146330"/>
<dbReference type="GeneCards" id="FBXL16"/>
<dbReference type="HGNC" id="HGNC:14150">
    <property type="gene designation" value="FBXL16"/>
</dbReference>
<dbReference type="HPA" id="ENSG00000127585">
    <property type="expression patterns" value="Tissue enriched (brain)"/>
</dbReference>
<dbReference type="MIM" id="609082">
    <property type="type" value="gene"/>
</dbReference>
<dbReference type="neXtProt" id="NX_Q8N461"/>
<dbReference type="OpenTargets" id="ENSG00000127585"/>
<dbReference type="PharmGKB" id="PA25536"/>
<dbReference type="VEuPathDB" id="HostDB:ENSG00000127585"/>
<dbReference type="eggNOG" id="KOG1947">
    <property type="taxonomic scope" value="Eukaryota"/>
</dbReference>
<dbReference type="GeneTree" id="ENSGT00940000159138"/>
<dbReference type="HOGENOM" id="CLU_027026_1_0_1"/>
<dbReference type="InParanoid" id="Q8N461"/>
<dbReference type="OMA" id="FWAGLMP"/>
<dbReference type="OrthoDB" id="10044893at2759"/>
<dbReference type="PAN-GO" id="Q8N461">
    <property type="GO annotations" value="2 GO annotations based on evolutionary models"/>
</dbReference>
<dbReference type="PhylomeDB" id="Q8N461"/>
<dbReference type="TreeFam" id="TF324260"/>
<dbReference type="PathwayCommons" id="Q8N461"/>
<dbReference type="Reactome" id="R-HSA-8951664">
    <property type="pathway name" value="Neddylation"/>
</dbReference>
<dbReference type="Reactome" id="R-HSA-983168">
    <property type="pathway name" value="Antigen processing: Ubiquitination &amp; Proteasome degradation"/>
</dbReference>
<dbReference type="SignaLink" id="Q8N461"/>
<dbReference type="BioGRID-ORCS" id="146330">
    <property type="hits" value="15 hits in 1190 CRISPR screens"/>
</dbReference>
<dbReference type="ChiTaRS" id="FBXL16">
    <property type="organism name" value="human"/>
</dbReference>
<dbReference type="GenomeRNAi" id="146330"/>
<dbReference type="Pharos" id="Q8N461">
    <property type="development level" value="Tdark"/>
</dbReference>
<dbReference type="PRO" id="PR:Q8N461"/>
<dbReference type="Proteomes" id="UP000005640">
    <property type="component" value="Chromosome 16"/>
</dbReference>
<dbReference type="RNAct" id="Q8N461">
    <property type="molecule type" value="protein"/>
</dbReference>
<dbReference type="Bgee" id="ENSG00000127585">
    <property type="expression patterns" value="Expressed in Brodmann (1909) area 46 and 168 other cell types or tissues"/>
</dbReference>
<dbReference type="GO" id="GO:0005829">
    <property type="term" value="C:cytosol"/>
    <property type="evidence" value="ECO:0000304"/>
    <property type="project" value="Reactome"/>
</dbReference>
<dbReference type="GO" id="GO:0019005">
    <property type="term" value="C:SCF ubiquitin ligase complex"/>
    <property type="evidence" value="ECO:0000318"/>
    <property type="project" value="GO_Central"/>
</dbReference>
<dbReference type="GO" id="GO:0031146">
    <property type="term" value="P:SCF-dependent proteasomal ubiquitin-dependent protein catabolic process"/>
    <property type="evidence" value="ECO:0000318"/>
    <property type="project" value="GO_Central"/>
</dbReference>
<dbReference type="CDD" id="cd22127">
    <property type="entry name" value="F-box_FBXL16"/>
    <property type="match status" value="1"/>
</dbReference>
<dbReference type="FunFam" id="3.80.10.10:FF:000262">
    <property type="entry name" value="F-box/LRR-repeat protein 16"/>
    <property type="match status" value="1"/>
</dbReference>
<dbReference type="FunFam" id="3.80.10.10:FF:000733">
    <property type="entry name" value="F-box/LRR-repeat protein 16"/>
    <property type="match status" value="1"/>
</dbReference>
<dbReference type="Gene3D" id="3.80.10.10">
    <property type="entry name" value="Ribonuclease Inhibitor"/>
    <property type="match status" value="2"/>
</dbReference>
<dbReference type="InterPro" id="IPR036047">
    <property type="entry name" value="F-box-like_dom_sf"/>
</dbReference>
<dbReference type="InterPro" id="IPR050648">
    <property type="entry name" value="F-box_LRR-repeat"/>
</dbReference>
<dbReference type="InterPro" id="IPR001611">
    <property type="entry name" value="Leu-rich_rpt"/>
</dbReference>
<dbReference type="InterPro" id="IPR006553">
    <property type="entry name" value="Leu-rich_rpt_Cys-con_subtyp"/>
</dbReference>
<dbReference type="InterPro" id="IPR032675">
    <property type="entry name" value="LRR_dom_sf"/>
</dbReference>
<dbReference type="PANTHER" id="PTHR13382">
    <property type="entry name" value="MITOCHONDRIAL ATP SYNTHASE COUPLING FACTOR B"/>
    <property type="match status" value="1"/>
</dbReference>
<dbReference type="Pfam" id="PF13516">
    <property type="entry name" value="LRR_6"/>
    <property type="match status" value="2"/>
</dbReference>
<dbReference type="SMART" id="SM00367">
    <property type="entry name" value="LRR_CC"/>
    <property type="match status" value="8"/>
</dbReference>
<dbReference type="SUPFAM" id="SSF81383">
    <property type="entry name" value="F-box domain"/>
    <property type="match status" value="1"/>
</dbReference>
<dbReference type="SUPFAM" id="SSF52047">
    <property type="entry name" value="RNI-like"/>
    <property type="match status" value="1"/>
</dbReference>
<reference key="1">
    <citation type="journal article" date="2004" name="Nat. Genet.">
        <title>Complete sequencing and characterization of 21,243 full-length human cDNAs.</title>
        <authorList>
            <person name="Ota T."/>
            <person name="Suzuki Y."/>
            <person name="Nishikawa T."/>
            <person name="Otsuki T."/>
            <person name="Sugiyama T."/>
            <person name="Irie R."/>
            <person name="Wakamatsu A."/>
            <person name="Hayashi K."/>
            <person name="Sato H."/>
            <person name="Nagai K."/>
            <person name="Kimura K."/>
            <person name="Makita H."/>
            <person name="Sekine M."/>
            <person name="Obayashi M."/>
            <person name="Nishi T."/>
            <person name="Shibahara T."/>
            <person name="Tanaka T."/>
            <person name="Ishii S."/>
            <person name="Yamamoto J."/>
            <person name="Saito K."/>
            <person name="Kawai Y."/>
            <person name="Isono Y."/>
            <person name="Nakamura Y."/>
            <person name="Nagahari K."/>
            <person name="Murakami K."/>
            <person name="Yasuda T."/>
            <person name="Iwayanagi T."/>
            <person name="Wagatsuma M."/>
            <person name="Shiratori A."/>
            <person name="Sudo H."/>
            <person name="Hosoiri T."/>
            <person name="Kaku Y."/>
            <person name="Kodaira H."/>
            <person name="Kondo H."/>
            <person name="Sugawara M."/>
            <person name="Takahashi M."/>
            <person name="Kanda K."/>
            <person name="Yokoi T."/>
            <person name="Furuya T."/>
            <person name="Kikkawa E."/>
            <person name="Omura Y."/>
            <person name="Abe K."/>
            <person name="Kamihara K."/>
            <person name="Katsuta N."/>
            <person name="Sato K."/>
            <person name="Tanikawa M."/>
            <person name="Yamazaki M."/>
            <person name="Ninomiya K."/>
            <person name="Ishibashi T."/>
            <person name="Yamashita H."/>
            <person name="Murakawa K."/>
            <person name="Fujimori K."/>
            <person name="Tanai H."/>
            <person name="Kimata M."/>
            <person name="Watanabe M."/>
            <person name="Hiraoka S."/>
            <person name="Chiba Y."/>
            <person name="Ishida S."/>
            <person name="Ono Y."/>
            <person name="Takiguchi S."/>
            <person name="Watanabe S."/>
            <person name="Yosida M."/>
            <person name="Hotuta T."/>
            <person name="Kusano J."/>
            <person name="Kanehori K."/>
            <person name="Takahashi-Fujii A."/>
            <person name="Hara H."/>
            <person name="Tanase T.-O."/>
            <person name="Nomura Y."/>
            <person name="Togiya S."/>
            <person name="Komai F."/>
            <person name="Hara R."/>
            <person name="Takeuchi K."/>
            <person name="Arita M."/>
            <person name="Imose N."/>
            <person name="Musashino K."/>
            <person name="Yuuki H."/>
            <person name="Oshima A."/>
            <person name="Sasaki N."/>
            <person name="Aotsuka S."/>
            <person name="Yoshikawa Y."/>
            <person name="Matsunawa H."/>
            <person name="Ichihara T."/>
            <person name="Shiohata N."/>
            <person name="Sano S."/>
            <person name="Moriya S."/>
            <person name="Momiyama H."/>
            <person name="Satoh N."/>
            <person name="Takami S."/>
            <person name="Terashima Y."/>
            <person name="Suzuki O."/>
            <person name="Nakagawa S."/>
            <person name="Senoh A."/>
            <person name="Mizoguchi H."/>
            <person name="Goto Y."/>
            <person name="Shimizu F."/>
            <person name="Wakebe H."/>
            <person name="Hishigaki H."/>
            <person name="Watanabe T."/>
            <person name="Sugiyama A."/>
            <person name="Takemoto M."/>
            <person name="Kawakami B."/>
            <person name="Yamazaki M."/>
            <person name="Watanabe K."/>
            <person name="Kumagai A."/>
            <person name="Itakura S."/>
            <person name="Fukuzumi Y."/>
            <person name="Fujimori Y."/>
            <person name="Komiyama M."/>
            <person name="Tashiro H."/>
            <person name="Tanigami A."/>
            <person name="Fujiwara T."/>
            <person name="Ono T."/>
            <person name="Yamada K."/>
            <person name="Fujii Y."/>
            <person name="Ozaki K."/>
            <person name="Hirao M."/>
            <person name="Ohmori Y."/>
            <person name="Kawabata A."/>
            <person name="Hikiji T."/>
            <person name="Kobatake N."/>
            <person name="Inagaki H."/>
            <person name="Ikema Y."/>
            <person name="Okamoto S."/>
            <person name="Okitani R."/>
            <person name="Kawakami T."/>
            <person name="Noguchi S."/>
            <person name="Itoh T."/>
            <person name="Shigeta K."/>
            <person name="Senba T."/>
            <person name="Matsumura K."/>
            <person name="Nakajima Y."/>
            <person name="Mizuno T."/>
            <person name="Morinaga M."/>
            <person name="Sasaki M."/>
            <person name="Togashi T."/>
            <person name="Oyama M."/>
            <person name="Hata H."/>
            <person name="Watanabe M."/>
            <person name="Komatsu T."/>
            <person name="Mizushima-Sugano J."/>
            <person name="Satoh T."/>
            <person name="Shirai Y."/>
            <person name="Takahashi Y."/>
            <person name="Nakagawa K."/>
            <person name="Okumura K."/>
            <person name="Nagase T."/>
            <person name="Nomura N."/>
            <person name="Kikuchi H."/>
            <person name="Masuho Y."/>
            <person name="Yamashita R."/>
            <person name="Nakai K."/>
            <person name="Yada T."/>
            <person name="Nakamura Y."/>
            <person name="Ohara O."/>
            <person name="Isogai T."/>
            <person name="Sugano S."/>
        </authorList>
    </citation>
    <scope>NUCLEOTIDE SEQUENCE [LARGE SCALE MRNA] (ISOFORM 2)</scope>
    <source>
        <tissue>Brain</tissue>
    </source>
</reference>
<reference key="2">
    <citation type="journal article" date="2001" name="Hum. Mol. Genet.">
        <title>Sequence, structure and pathology of the fully annotated terminal 2 Mb of the short arm of human chromosome 16.</title>
        <authorList>
            <person name="Daniels R.J."/>
            <person name="Peden J.F."/>
            <person name="Lloyd C."/>
            <person name="Horsley S.W."/>
            <person name="Clark K."/>
            <person name="Tufarelli C."/>
            <person name="Kearney L."/>
            <person name="Buckle V.J."/>
            <person name="Doggett N.A."/>
            <person name="Flint J."/>
            <person name="Higgs D.R."/>
        </authorList>
    </citation>
    <scope>NUCLEOTIDE SEQUENCE [LARGE SCALE GENOMIC DNA]</scope>
    <scope>VARIANT PRO-429</scope>
</reference>
<reference key="3">
    <citation type="submission" date="2005-09" db="EMBL/GenBank/DDBJ databases">
        <authorList>
            <person name="Mural R.J."/>
            <person name="Istrail S."/>
            <person name="Sutton G.G."/>
            <person name="Florea L."/>
            <person name="Halpern A.L."/>
            <person name="Mobarry C.M."/>
            <person name="Lippert R."/>
            <person name="Walenz B."/>
            <person name="Shatkay H."/>
            <person name="Dew I."/>
            <person name="Miller J.R."/>
            <person name="Flanigan M.J."/>
            <person name="Edwards N.J."/>
            <person name="Bolanos R."/>
            <person name="Fasulo D."/>
            <person name="Halldorsson B.V."/>
            <person name="Hannenhalli S."/>
            <person name="Turner R."/>
            <person name="Yooseph S."/>
            <person name="Lu F."/>
            <person name="Nusskern D.R."/>
            <person name="Shue B.C."/>
            <person name="Zheng X.H."/>
            <person name="Zhong F."/>
            <person name="Delcher A.L."/>
            <person name="Huson D.H."/>
            <person name="Kravitz S.A."/>
            <person name="Mouchard L."/>
            <person name="Reinert K."/>
            <person name="Remington K.A."/>
            <person name="Clark A.G."/>
            <person name="Waterman M.S."/>
            <person name="Eichler E.E."/>
            <person name="Adams M.D."/>
            <person name="Hunkapiller M.W."/>
            <person name="Myers E.W."/>
            <person name="Venter J.C."/>
        </authorList>
    </citation>
    <scope>NUCLEOTIDE SEQUENCE [LARGE SCALE GENOMIC DNA]</scope>
</reference>
<reference key="4">
    <citation type="journal article" date="2004" name="Nature">
        <title>The sequence and analysis of duplication-rich human chromosome 16.</title>
        <authorList>
            <person name="Martin J."/>
            <person name="Han C."/>
            <person name="Gordon L.A."/>
            <person name="Terry A."/>
            <person name="Prabhakar S."/>
            <person name="She X."/>
            <person name="Xie G."/>
            <person name="Hellsten U."/>
            <person name="Chan Y.M."/>
            <person name="Altherr M."/>
            <person name="Couronne O."/>
            <person name="Aerts A."/>
            <person name="Bajorek E."/>
            <person name="Black S."/>
            <person name="Blumer H."/>
            <person name="Branscomb E."/>
            <person name="Brown N.C."/>
            <person name="Bruno W.J."/>
            <person name="Buckingham J.M."/>
            <person name="Callen D.F."/>
            <person name="Campbell C.S."/>
            <person name="Campbell M.L."/>
            <person name="Campbell E.W."/>
            <person name="Caoile C."/>
            <person name="Challacombe J.F."/>
            <person name="Chasteen L.A."/>
            <person name="Chertkov O."/>
            <person name="Chi H.C."/>
            <person name="Christensen M."/>
            <person name="Clark L.M."/>
            <person name="Cohn J.D."/>
            <person name="Denys M."/>
            <person name="Detter J.C."/>
            <person name="Dickson M."/>
            <person name="Dimitrijevic-Bussod M."/>
            <person name="Escobar J."/>
            <person name="Fawcett J.J."/>
            <person name="Flowers D."/>
            <person name="Fotopulos D."/>
            <person name="Glavina T."/>
            <person name="Gomez M."/>
            <person name="Gonzales E."/>
            <person name="Goodstein D."/>
            <person name="Goodwin L.A."/>
            <person name="Grady D.L."/>
            <person name="Grigoriev I."/>
            <person name="Groza M."/>
            <person name="Hammon N."/>
            <person name="Hawkins T."/>
            <person name="Haydu L."/>
            <person name="Hildebrand C.E."/>
            <person name="Huang W."/>
            <person name="Israni S."/>
            <person name="Jett J."/>
            <person name="Jewett P.B."/>
            <person name="Kadner K."/>
            <person name="Kimball H."/>
            <person name="Kobayashi A."/>
            <person name="Krawczyk M.-C."/>
            <person name="Leyba T."/>
            <person name="Longmire J.L."/>
            <person name="Lopez F."/>
            <person name="Lou Y."/>
            <person name="Lowry S."/>
            <person name="Ludeman T."/>
            <person name="Manohar C.F."/>
            <person name="Mark G.A."/>
            <person name="McMurray K.L."/>
            <person name="Meincke L.J."/>
            <person name="Morgan J."/>
            <person name="Moyzis R.K."/>
            <person name="Mundt M.O."/>
            <person name="Munk A.C."/>
            <person name="Nandkeshwar R.D."/>
            <person name="Pitluck S."/>
            <person name="Pollard M."/>
            <person name="Predki P."/>
            <person name="Parson-Quintana B."/>
            <person name="Ramirez L."/>
            <person name="Rash S."/>
            <person name="Retterer J."/>
            <person name="Ricke D.O."/>
            <person name="Robinson D.L."/>
            <person name="Rodriguez A."/>
            <person name="Salamov A."/>
            <person name="Saunders E.H."/>
            <person name="Scott D."/>
            <person name="Shough T."/>
            <person name="Stallings R.L."/>
            <person name="Stalvey M."/>
            <person name="Sutherland R.D."/>
            <person name="Tapia R."/>
            <person name="Tesmer J.G."/>
            <person name="Thayer N."/>
            <person name="Thompson L.S."/>
            <person name="Tice H."/>
            <person name="Torney D.C."/>
            <person name="Tran-Gyamfi M."/>
            <person name="Tsai M."/>
            <person name="Ulanovsky L.E."/>
            <person name="Ustaszewska A."/>
            <person name="Vo N."/>
            <person name="White P.S."/>
            <person name="Williams A.L."/>
            <person name="Wills P.L."/>
            <person name="Wu J.-R."/>
            <person name="Wu K."/>
            <person name="Yang J."/>
            <person name="DeJong P."/>
            <person name="Bruce D."/>
            <person name="Doggett N.A."/>
            <person name="Deaven L."/>
            <person name="Schmutz J."/>
            <person name="Grimwood J."/>
            <person name="Richardson P."/>
            <person name="Rokhsar D.S."/>
            <person name="Eichler E.E."/>
            <person name="Gilna P."/>
            <person name="Lucas S.M."/>
            <person name="Myers R.M."/>
            <person name="Rubin E.M."/>
            <person name="Pennacchio L.A."/>
        </authorList>
    </citation>
    <scope>NUCLEOTIDE SEQUENCE [LARGE SCALE GENOMIC DNA]</scope>
</reference>
<reference key="5">
    <citation type="journal article" date="2004" name="Genome Res.">
        <title>The status, quality, and expansion of the NIH full-length cDNA project: the Mammalian Gene Collection (MGC).</title>
        <authorList>
            <consortium name="The MGC Project Team"/>
        </authorList>
    </citation>
    <scope>NUCLEOTIDE SEQUENCE [LARGE SCALE MRNA] (ISOFORM 1)</scope>
    <scope>VARIANT PRO-429</scope>
    <source>
        <tissue>Brain</tissue>
    </source>
</reference>
<organism>
    <name type="scientific">Homo sapiens</name>
    <name type="common">Human</name>
    <dbReference type="NCBI Taxonomy" id="9606"/>
    <lineage>
        <taxon>Eukaryota</taxon>
        <taxon>Metazoa</taxon>
        <taxon>Chordata</taxon>
        <taxon>Craniata</taxon>
        <taxon>Vertebrata</taxon>
        <taxon>Euteleostomi</taxon>
        <taxon>Mammalia</taxon>
        <taxon>Eutheria</taxon>
        <taxon>Euarchontoglires</taxon>
        <taxon>Primates</taxon>
        <taxon>Haplorrhini</taxon>
        <taxon>Catarrhini</taxon>
        <taxon>Hominidae</taxon>
        <taxon>Homo</taxon>
    </lineage>
</organism>
<protein>
    <recommendedName>
        <fullName>F-box/LRR-repeat protein 16</fullName>
    </recommendedName>
    <alternativeName>
        <fullName>F-box and leucine-rich repeat protein 16</fullName>
    </alternativeName>
</protein>
<sequence>MSSPGIDGDPKPPCLPRNGLVKLPGQPNGLGAASITKGTPATKNRPCQPPPPPTLPPPSLAAPLSRAALAGGPCTPAGGPASALAPGHPAERPPLATDEKILNGLFWYFSACEKCVLAQVCKAWRRVLYQPKFWAGLTPVLHAKELYNVLPGGEKEFVNLQGFAARGFEGFCLVGVSDLDICEFIDNYALSKKGVKAMSLKRSTITDAGLEVMLEQMQGVVRLELSGCNDFTEAGLWSSLSARITSLSVSDCINVADDAIAAISQLLPNLAELSLQAYHVTDTALAYFTARQGHSTHTLRLLSCWEITNHGVVNVVHSLPNLTALSLSGCSKVTDDGVELVAENLRKLRSLDLSWCPRITDMALEYVACDLHRLEELVLDRCVRITDTGLSYLSTMSSLRSLYLRWCCQVQDFGLKHLLALGSLRLLSLAGCPLLTTTGLSGLVQLQELEELELTNCPGATPELFKYFSQHLPRCLVIE</sequence>
<keyword id="KW-0025">Alternative splicing</keyword>
<keyword id="KW-0433">Leucine-rich repeat</keyword>
<keyword id="KW-0488">Methylation</keyword>
<keyword id="KW-1267">Proteomics identification</keyword>
<keyword id="KW-1185">Reference proteome</keyword>
<keyword id="KW-0677">Repeat</keyword>
<keyword id="KW-0833">Ubl conjugation pathway</keyword>
<gene>
    <name type="primary">FBXL16</name>
    <name type="synonym">C16orf22</name>
    <name type="synonym">FBL16</name>
</gene>